<dbReference type="EC" id="2.4.2.52" evidence="1"/>
<dbReference type="EMBL" id="CP001233">
    <property type="protein sequence ID" value="ACP05080.1"/>
    <property type="molecule type" value="Genomic_DNA"/>
</dbReference>
<dbReference type="RefSeq" id="WP_000154857.1">
    <property type="nucleotide sequence ID" value="NC_012578.1"/>
</dbReference>
<dbReference type="KEGG" id="vcm:VCM66_0759"/>
<dbReference type="HOGENOM" id="CLU_056179_1_0_6"/>
<dbReference type="Proteomes" id="UP000001217">
    <property type="component" value="Chromosome I"/>
</dbReference>
<dbReference type="GO" id="GO:0005524">
    <property type="term" value="F:ATP binding"/>
    <property type="evidence" value="ECO:0007669"/>
    <property type="project" value="UniProtKB-KW"/>
</dbReference>
<dbReference type="GO" id="GO:0046917">
    <property type="term" value="F:triphosphoribosyl-dephospho-CoA synthase activity"/>
    <property type="evidence" value="ECO:0007669"/>
    <property type="project" value="UniProtKB-UniRule"/>
</dbReference>
<dbReference type="GO" id="GO:0051191">
    <property type="term" value="P:prosthetic group biosynthetic process"/>
    <property type="evidence" value="ECO:0007669"/>
    <property type="project" value="TreeGrafter"/>
</dbReference>
<dbReference type="FunFam" id="1.10.4200.10:FF:000001">
    <property type="entry name" value="Triphosphoribosyl-dephospho-CoA synthase CitG"/>
    <property type="match status" value="1"/>
</dbReference>
<dbReference type="Gene3D" id="1.10.4200.10">
    <property type="entry name" value="Triphosphoribosyl-dephospho-CoA protein"/>
    <property type="match status" value="1"/>
</dbReference>
<dbReference type="HAMAP" id="MF_00397">
    <property type="entry name" value="CitG"/>
    <property type="match status" value="1"/>
</dbReference>
<dbReference type="InterPro" id="IPR002736">
    <property type="entry name" value="CitG"/>
</dbReference>
<dbReference type="InterPro" id="IPR017551">
    <property type="entry name" value="TriPribosyl-deP-CoA_syn_CitG"/>
</dbReference>
<dbReference type="NCBIfam" id="TIGR03125">
    <property type="entry name" value="citrate_citG"/>
    <property type="match status" value="1"/>
</dbReference>
<dbReference type="PANTHER" id="PTHR30201:SF2">
    <property type="entry name" value="2-(5''-TRIPHOSPHORIBOSYL)-3'-DEPHOSPHOCOENZYME-A SYNTHASE"/>
    <property type="match status" value="1"/>
</dbReference>
<dbReference type="PANTHER" id="PTHR30201">
    <property type="entry name" value="TRIPHOSPHORIBOSYL-DEPHOSPHO-COA SYNTHASE"/>
    <property type="match status" value="1"/>
</dbReference>
<dbReference type="Pfam" id="PF01874">
    <property type="entry name" value="CitG"/>
    <property type="match status" value="1"/>
</dbReference>
<organism>
    <name type="scientific">Vibrio cholerae serotype O1 (strain M66-2)</name>
    <dbReference type="NCBI Taxonomy" id="579112"/>
    <lineage>
        <taxon>Bacteria</taxon>
        <taxon>Pseudomonadati</taxon>
        <taxon>Pseudomonadota</taxon>
        <taxon>Gammaproteobacteria</taxon>
        <taxon>Vibrionales</taxon>
        <taxon>Vibrionaceae</taxon>
        <taxon>Vibrio</taxon>
    </lineage>
</organism>
<sequence length="313" mass="33676">MTIPAALDLLLELPSQASSSSGSRTFSLPRLVGHLAYHAMMLEVHLTPKPGLVDTANNGAHRDMDLNTFIASAEAIAPYLHSFVSAGWESAGNPAAQLLSALRPIGIEAEQAMFAATQGVNTHKGMIFILGLICGSVGWLKANQLKIDAQHIGETIRQACQFLVIDELKAKRDCEPETAGERIYRQYGLTGARGEAASGLAMVMQHALPAYQACLTKGASTEQALWHTLLVLMANNNDSNLVSRGGLAGLHFVQEQAQQLLAKGGFLYQEIEQALTALDSVLIEKHLSPGGSADLLAATWLIYELVQLFKVRH</sequence>
<feature type="chain" id="PRO_1000189597" description="Probable 2-(5''-triphosphoribosyl)-3'-dephosphocoenzyme-A synthase">
    <location>
        <begin position="1"/>
        <end position="313"/>
    </location>
</feature>
<reference key="1">
    <citation type="journal article" date="2008" name="PLoS ONE">
        <title>A recalibrated molecular clock and independent origins for the cholera pandemic clones.</title>
        <authorList>
            <person name="Feng L."/>
            <person name="Reeves P.R."/>
            <person name="Lan R."/>
            <person name="Ren Y."/>
            <person name="Gao C."/>
            <person name="Zhou Z."/>
            <person name="Ren Y."/>
            <person name="Cheng J."/>
            <person name="Wang W."/>
            <person name="Wang J."/>
            <person name="Qian W."/>
            <person name="Li D."/>
            <person name="Wang L."/>
        </authorList>
    </citation>
    <scope>NUCLEOTIDE SEQUENCE [LARGE SCALE GENOMIC DNA]</scope>
    <source>
        <strain>M66-2</strain>
    </source>
</reference>
<proteinExistence type="inferred from homology"/>
<evidence type="ECO:0000255" key="1">
    <source>
        <dbReference type="HAMAP-Rule" id="MF_00397"/>
    </source>
</evidence>
<keyword id="KW-0067">ATP-binding</keyword>
<keyword id="KW-0547">Nucleotide-binding</keyword>
<keyword id="KW-0808">Transferase</keyword>
<comment type="catalytic activity">
    <reaction evidence="1">
        <text>3'-dephospho-CoA + ATP = 2'-(5''-triphospho-alpha-D-ribosyl)-3'-dephospho-CoA + adenine</text>
        <dbReference type="Rhea" id="RHEA:15117"/>
        <dbReference type="ChEBI" id="CHEBI:16708"/>
        <dbReference type="ChEBI" id="CHEBI:30616"/>
        <dbReference type="ChEBI" id="CHEBI:57328"/>
        <dbReference type="ChEBI" id="CHEBI:61378"/>
        <dbReference type="EC" id="2.4.2.52"/>
    </reaction>
</comment>
<comment type="similarity">
    <text evidence="1">Belongs to the CitG/MdcB family.</text>
</comment>
<name>CITG_VIBCM</name>
<accession>C3LT54</accession>
<protein>
    <recommendedName>
        <fullName evidence="1">Probable 2-(5''-triphosphoribosyl)-3'-dephosphocoenzyme-A synthase</fullName>
        <shortName evidence="1">2-(5''-triphosphoribosyl)-3'-dephospho-CoA synthase</shortName>
        <ecNumber evidence="1">2.4.2.52</ecNumber>
    </recommendedName>
</protein>
<gene>
    <name evidence="1" type="primary">citG</name>
    <name type="ordered locus">VCM66_0759</name>
</gene>